<name>Y576_ARCFU</name>
<reference key="1">
    <citation type="journal article" date="1997" name="Nature">
        <title>The complete genome sequence of the hyperthermophilic, sulphate-reducing archaeon Archaeoglobus fulgidus.</title>
        <authorList>
            <person name="Klenk H.-P."/>
            <person name="Clayton R.A."/>
            <person name="Tomb J.-F."/>
            <person name="White O."/>
            <person name="Nelson K.E."/>
            <person name="Ketchum K.A."/>
            <person name="Dodson R.J."/>
            <person name="Gwinn M.L."/>
            <person name="Hickey E.K."/>
            <person name="Peterson J.D."/>
            <person name="Richardson D.L."/>
            <person name="Kerlavage A.R."/>
            <person name="Graham D.E."/>
            <person name="Kyrpides N.C."/>
            <person name="Fleischmann R.D."/>
            <person name="Quackenbush J."/>
            <person name="Lee N.H."/>
            <person name="Sutton G.G."/>
            <person name="Gill S.R."/>
            <person name="Kirkness E.F."/>
            <person name="Dougherty B.A."/>
            <person name="McKenney K."/>
            <person name="Adams M.D."/>
            <person name="Loftus B.J."/>
            <person name="Peterson S.N."/>
            <person name="Reich C.I."/>
            <person name="McNeil L.K."/>
            <person name="Badger J.H."/>
            <person name="Glodek A."/>
            <person name="Zhou L."/>
            <person name="Overbeek R."/>
            <person name="Gocayne J.D."/>
            <person name="Weidman J.F."/>
            <person name="McDonald L.A."/>
            <person name="Utterback T.R."/>
            <person name="Cotton M.D."/>
            <person name="Spriggs T."/>
            <person name="Artiach P."/>
            <person name="Kaine B.P."/>
            <person name="Sykes S.M."/>
            <person name="Sadow P.W."/>
            <person name="D'Andrea K.P."/>
            <person name="Bowman C."/>
            <person name="Fujii C."/>
            <person name="Garland S.A."/>
            <person name="Mason T.M."/>
            <person name="Olsen G.J."/>
            <person name="Fraser C.M."/>
            <person name="Smith H.O."/>
            <person name="Woese C.R."/>
            <person name="Venter J.C."/>
        </authorList>
    </citation>
    <scope>NUCLEOTIDE SEQUENCE [LARGE SCALE GENOMIC DNA]</scope>
    <source>
        <strain>ATCC 49558 / DSM 4304 / JCM 9628 / NBRC 100126 / VC-16</strain>
    </source>
</reference>
<organism>
    <name type="scientific">Archaeoglobus fulgidus (strain ATCC 49558 / DSM 4304 / JCM 9628 / NBRC 100126 / VC-16)</name>
    <dbReference type="NCBI Taxonomy" id="224325"/>
    <lineage>
        <taxon>Archaea</taxon>
        <taxon>Methanobacteriati</taxon>
        <taxon>Methanobacteriota</taxon>
        <taxon>Archaeoglobi</taxon>
        <taxon>Archaeoglobales</taxon>
        <taxon>Archaeoglobaceae</taxon>
        <taxon>Archaeoglobus</taxon>
    </lineage>
</organism>
<gene>
    <name type="ordered locus">AF_0576</name>
</gene>
<keyword id="KW-1185">Reference proteome</keyword>
<sequence>MMRHVFGMSAEEAKFELRRVLERLGFQVKEMDSEILAEKGSKAVRISLKELGRSELNIPQTEVVFECEEEIYRSILERLRLSRMGG</sequence>
<dbReference type="EMBL" id="AE000782">
    <property type="protein sequence ID" value="AAB90675.1"/>
    <property type="molecule type" value="Genomic_DNA"/>
</dbReference>
<dbReference type="PIR" id="H69321">
    <property type="entry name" value="H69321"/>
</dbReference>
<dbReference type="SMR" id="O29679"/>
<dbReference type="STRING" id="224325.AF_0576"/>
<dbReference type="PaxDb" id="224325-AF_0576"/>
<dbReference type="EnsemblBacteria" id="AAB90675">
    <property type="protein sequence ID" value="AAB90675"/>
    <property type="gene ID" value="AF_0576"/>
</dbReference>
<dbReference type="KEGG" id="afu:AF_0576"/>
<dbReference type="eggNOG" id="arCOG12195">
    <property type="taxonomic scope" value="Archaea"/>
</dbReference>
<dbReference type="HOGENOM" id="CLU_2504773_0_0_2"/>
<dbReference type="Proteomes" id="UP000002199">
    <property type="component" value="Chromosome"/>
</dbReference>
<dbReference type="InterPro" id="IPR026486">
    <property type="entry name" value="CHP_AF_0576"/>
</dbReference>
<dbReference type="NCBIfam" id="TIGR04140">
    <property type="entry name" value="chp_AF_0576"/>
    <property type="match status" value="1"/>
</dbReference>
<protein>
    <recommendedName>
        <fullName>Uncharacterized protein AF_0576</fullName>
    </recommendedName>
</protein>
<proteinExistence type="predicted"/>
<accession>O29679</accession>
<feature type="chain" id="PRO_0000127890" description="Uncharacterized protein AF_0576">
    <location>
        <begin position="1"/>
        <end position="86"/>
    </location>
</feature>